<comment type="catalytic activity">
    <reaction>
        <text>L-seryl-[protein] + ATP = O-phospho-L-seryl-[protein] + ADP + H(+)</text>
        <dbReference type="Rhea" id="RHEA:17989"/>
        <dbReference type="Rhea" id="RHEA-COMP:9863"/>
        <dbReference type="Rhea" id="RHEA-COMP:11604"/>
        <dbReference type="ChEBI" id="CHEBI:15378"/>
        <dbReference type="ChEBI" id="CHEBI:29999"/>
        <dbReference type="ChEBI" id="CHEBI:30616"/>
        <dbReference type="ChEBI" id="CHEBI:83421"/>
        <dbReference type="ChEBI" id="CHEBI:456216"/>
        <dbReference type="EC" id="2.7.11.1"/>
    </reaction>
</comment>
<comment type="catalytic activity">
    <reaction>
        <text>L-threonyl-[protein] + ATP = O-phospho-L-threonyl-[protein] + ADP + H(+)</text>
        <dbReference type="Rhea" id="RHEA:46608"/>
        <dbReference type="Rhea" id="RHEA-COMP:11060"/>
        <dbReference type="Rhea" id="RHEA-COMP:11605"/>
        <dbReference type="ChEBI" id="CHEBI:15378"/>
        <dbReference type="ChEBI" id="CHEBI:30013"/>
        <dbReference type="ChEBI" id="CHEBI:30616"/>
        <dbReference type="ChEBI" id="CHEBI:61977"/>
        <dbReference type="ChEBI" id="CHEBI:456216"/>
        <dbReference type="EC" id="2.7.11.1"/>
    </reaction>
</comment>
<comment type="similarity">
    <text evidence="2">Belongs to the protein kinase superfamily. Ser/Thr protein kinase family.</text>
</comment>
<name>Y4103_ARATH</name>
<sequence>MACFLNCVRFDVSKTITDKPTSQGSGVTCYNSWDDVETLTSNFSRLIGSGGYSSIYMARFSGSDKAALKVHVSSHRLYQVFRLELDILLRLQHPNIVKLLGYFDDSEENGALLLEYLPQGNLQEKLQSNSKQVLQWRNRVAIALQLVQAIEHIHEKCSPQIVHGDIKSSNVLLDKNFDCKLCDFGSAKVGFSSMVQPPTMSPRSRQVKMVGSPGYTDPHYLRTGIASKKMDMYGFGVVVLELVSGKEAFSAERGEMLVHIAAPLMNEILDSSVDISEDKVRQFLDPRLLRDSLDIDEVKTMLSVAAVCISSKLSLRPSAAQVADTLIKEIPSLSFLGCGKGV</sequence>
<keyword id="KW-0067">ATP-binding</keyword>
<keyword id="KW-0418">Kinase</keyword>
<keyword id="KW-0547">Nucleotide-binding</keyword>
<keyword id="KW-0597">Phosphoprotein</keyword>
<keyword id="KW-1185">Reference proteome</keyword>
<keyword id="KW-0723">Serine/threonine-protein kinase</keyword>
<keyword id="KW-0808">Transferase</keyword>
<protein>
    <recommendedName>
        <fullName>Probable receptor-like protein kinase At4g10390</fullName>
        <ecNumber>2.7.11.1</ecNumber>
    </recommendedName>
</protein>
<proteinExistence type="evidence at transcript level"/>
<accession>Q9SV83</accession>
<reference key="1">
    <citation type="journal article" date="1999" name="Nature">
        <title>Sequence and analysis of chromosome 4 of the plant Arabidopsis thaliana.</title>
        <authorList>
            <person name="Mayer K.F.X."/>
            <person name="Schueller C."/>
            <person name="Wambutt R."/>
            <person name="Murphy G."/>
            <person name="Volckaert G."/>
            <person name="Pohl T."/>
            <person name="Duesterhoeft A."/>
            <person name="Stiekema W."/>
            <person name="Entian K.-D."/>
            <person name="Terryn N."/>
            <person name="Harris B."/>
            <person name="Ansorge W."/>
            <person name="Brandt P."/>
            <person name="Grivell L.A."/>
            <person name="Rieger M."/>
            <person name="Weichselgartner M."/>
            <person name="de Simone V."/>
            <person name="Obermaier B."/>
            <person name="Mache R."/>
            <person name="Mueller M."/>
            <person name="Kreis M."/>
            <person name="Delseny M."/>
            <person name="Puigdomenech P."/>
            <person name="Watson M."/>
            <person name="Schmidtheini T."/>
            <person name="Reichert B."/>
            <person name="Portetelle D."/>
            <person name="Perez-Alonso M."/>
            <person name="Boutry M."/>
            <person name="Bancroft I."/>
            <person name="Vos P."/>
            <person name="Hoheisel J."/>
            <person name="Zimmermann W."/>
            <person name="Wedler H."/>
            <person name="Ridley P."/>
            <person name="Langham S.-A."/>
            <person name="McCullagh B."/>
            <person name="Bilham L."/>
            <person name="Robben J."/>
            <person name="van der Schueren J."/>
            <person name="Grymonprez B."/>
            <person name="Chuang Y.-J."/>
            <person name="Vandenbussche F."/>
            <person name="Braeken M."/>
            <person name="Weltjens I."/>
            <person name="Voet M."/>
            <person name="Bastiaens I."/>
            <person name="Aert R."/>
            <person name="Defoor E."/>
            <person name="Weitzenegger T."/>
            <person name="Bothe G."/>
            <person name="Ramsperger U."/>
            <person name="Hilbert H."/>
            <person name="Braun M."/>
            <person name="Holzer E."/>
            <person name="Brandt A."/>
            <person name="Peters S."/>
            <person name="van Staveren M."/>
            <person name="Dirkse W."/>
            <person name="Mooijman P."/>
            <person name="Klein Lankhorst R."/>
            <person name="Rose M."/>
            <person name="Hauf J."/>
            <person name="Koetter P."/>
            <person name="Berneiser S."/>
            <person name="Hempel S."/>
            <person name="Feldpausch M."/>
            <person name="Lamberth S."/>
            <person name="Van den Daele H."/>
            <person name="De Keyser A."/>
            <person name="Buysshaert C."/>
            <person name="Gielen J."/>
            <person name="Villarroel R."/>
            <person name="De Clercq R."/>
            <person name="van Montagu M."/>
            <person name="Rogers J."/>
            <person name="Cronin A."/>
            <person name="Quail M.A."/>
            <person name="Bray-Allen S."/>
            <person name="Clark L."/>
            <person name="Doggett J."/>
            <person name="Hall S."/>
            <person name="Kay M."/>
            <person name="Lennard N."/>
            <person name="McLay K."/>
            <person name="Mayes R."/>
            <person name="Pettett A."/>
            <person name="Rajandream M.A."/>
            <person name="Lyne M."/>
            <person name="Benes V."/>
            <person name="Rechmann S."/>
            <person name="Borkova D."/>
            <person name="Bloecker H."/>
            <person name="Scharfe M."/>
            <person name="Grimm M."/>
            <person name="Loehnert T.-H."/>
            <person name="Dose S."/>
            <person name="de Haan M."/>
            <person name="Maarse A.C."/>
            <person name="Schaefer M."/>
            <person name="Mueller-Auer S."/>
            <person name="Gabel C."/>
            <person name="Fuchs M."/>
            <person name="Fartmann B."/>
            <person name="Granderath K."/>
            <person name="Dauner D."/>
            <person name="Herzl A."/>
            <person name="Neumann S."/>
            <person name="Argiriou A."/>
            <person name="Vitale D."/>
            <person name="Liguori R."/>
            <person name="Piravandi E."/>
            <person name="Massenet O."/>
            <person name="Quigley F."/>
            <person name="Clabauld G."/>
            <person name="Muendlein A."/>
            <person name="Felber R."/>
            <person name="Schnabl S."/>
            <person name="Hiller R."/>
            <person name="Schmidt W."/>
            <person name="Lecharny A."/>
            <person name="Aubourg S."/>
            <person name="Chefdor F."/>
            <person name="Cooke R."/>
            <person name="Berger C."/>
            <person name="Monfort A."/>
            <person name="Casacuberta E."/>
            <person name="Gibbons T."/>
            <person name="Weber N."/>
            <person name="Vandenbol M."/>
            <person name="Bargues M."/>
            <person name="Terol J."/>
            <person name="Torres A."/>
            <person name="Perez-Perez A."/>
            <person name="Purnelle B."/>
            <person name="Bent E."/>
            <person name="Johnson S."/>
            <person name="Tacon D."/>
            <person name="Jesse T."/>
            <person name="Heijnen L."/>
            <person name="Schwarz S."/>
            <person name="Scholler P."/>
            <person name="Heber S."/>
            <person name="Francs P."/>
            <person name="Bielke C."/>
            <person name="Frishman D."/>
            <person name="Haase D."/>
            <person name="Lemcke K."/>
            <person name="Mewes H.-W."/>
            <person name="Stocker S."/>
            <person name="Zaccaria P."/>
            <person name="Bevan M."/>
            <person name="Wilson R.K."/>
            <person name="de la Bastide M."/>
            <person name="Habermann K."/>
            <person name="Parnell L."/>
            <person name="Dedhia N."/>
            <person name="Gnoj L."/>
            <person name="Schutz K."/>
            <person name="Huang E."/>
            <person name="Spiegel L."/>
            <person name="Sekhon M."/>
            <person name="Murray J."/>
            <person name="Sheet P."/>
            <person name="Cordes M."/>
            <person name="Abu-Threideh J."/>
            <person name="Stoneking T."/>
            <person name="Kalicki J."/>
            <person name="Graves T."/>
            <person name="Harmon G."/>
            <person name="Edwards J."/>
            <person name="Latreille P."/>
            <person name="Courtney L."/>
            <person name="Cloud J."/>
            <person name="Abbott A."/>
            <person name="Scott K."/>
            <person name="Johnson D."/>
            <person name="Minx P."/>
            <person name="Bentley D."/>
            <person name="Fulton B."/>
            <person name="Miller N."/>
            <person name="Greco T."/>
            <person name="Kemp K."/>
            <person name="Kramer J."/>
            <person name="Fulton L."/>
            <person name="Mardis E."/>
            <person name="Dante M."/>
            <person name="Pepin K."/>
            <person name="Hillier L.W."/>
            <person name="Nelson J."/>
            <person name="Spieth J."/>
            <person name="Ryan E."/>
            <person name="Andrews S."/>
            <person name="Geisel C."/>
            <person name="Layman D."/>
            <person name="Du H."/>
            <person name="Ali J."/>
            <person name="Berghoff A."/>
            <person name="Jones K."/>
            <person name="Drone K."/>
            <person name="Cotton M."/>
            <person name="Joshu C."/>
            <person name="Antonoiu B."/>
            <person name="Zidanic M."/>
            <person name="Strong C."/>
            <person name="Sun H."/>
            <person name="Lamar B."/>
            <person name="Yordan C."/>
            <person name="Ma P."/>
            <person name="Zhong J."/>
            <person name="Preston R."/>
            <person name="Vil D."/>
            <person name="Shekher M."/>
            <person name="Matero A."/>
            <person name="Shah R."/>
            <person name="Swaby I.K."/>
            <person name="O'Shaughnessy A."/>
            <person name="Rodriguez M."/>
            <person name="Hoffman J."/>
            <person name="Till S."/>
            <person name="Granat S."/>
            <person name="Shohdy N."/>
            <person name="Hasegawa A."/>
            <person name="Hameed A."/>
            <person name="Lodhi M."/>
            <person name="Johnson A."/>
            <person name="Chen E."/>
            <person name="Marra M.A."/>
            <person name="Martienssen R."/>
            <person name="McCombie W.R."/>
        </authorList>
    </citation>
    <scope>NUCLEOTIDE SEQUENCE [LARGE SCALE GENOMIC DNA]</scope>
    <source>
        <strain>cv. Columbia</strain>
    </source>
</reference>
<reference key="2">
    <citation type="journal article" date="2017" name="Plant J.">
        <title>Araport11: a complete reannotation of the Arabidopsis thaliana reference genome.</title>
        <authorList>
            <person name="Cheng C.Y."/>
            <person name="Krishnakumar V."/>
            <person name="Chan A.P."/>
            <person name="Thibaud-Nissen F."/>
            <person name="Schobel S."/>
            <person name="Town C.D."/>
        </authorList>
    </citation>
    <scope>GENOME REANNOTATION</scope>
    <source>
        <strain>cv. Columbia</strain>
    </source>
</reference>
<reference key="3">
    <citation type="journal article" date="2003" name="Science">
        <title>Empirical analysis of transcriptional activity in the Arabidopsis genome.</title>
        <authorList>
            <person name="Yamada K."/>
            <person name="Lim J."/>
            <person name="Dale J.M."/>
            <person name="Chen H."/>
            <person name="Shinn P."/>
            <person name="Palm C.J."/>
            <person name="Southwick A.M."/>
            <person name="Wu H.C."/>
            <person name="Kim C.J."/>
            <person name="Nguyen M."/>
            <person name="Pham P.K."/>
            <person name="Cheuk R.F."/>
            <person name="Karlin-Newmann G."/>
            <person name="Liu S.X."/>
            <person name="Lam B."/>
            <person name="Sakano H."/>
            <person name="Wu T."/>
            <person name="Yu G."/>
            <person name="Miranda M."/>
            <person name="Quach H.L."/>
            <person name="Tripp M."/>
            <person name="Chang C.H."/>
            <person name="Lee J.M."/>
            <person name="Toriumi M.J."/>
            <person name="Chan M.M."/>
            <person name="Tang C.C."/>
            <person name="Onodera C.S."/>
            <person name="Deng J.M."/>
            <person name="Akiyama K."/>
            <person name="Ansari Y."/>
            <person name="Arakawa T."/>
            <person name="Banh J."/>
            <person name="Banno F."/>
            <person name="Bowser L."/>
            <person name="Brooks S.Y."/>
            <person name="Carninci P."/>
            <person name="Chao Q."/>
            <person name="Choy N."/>
            <person name="Enju A."/>
            <person name="Goldsmith A.D."/>
            <person name="Gurjal M."/>
            <person name="Hansen N.F."/>
            <person name="Hayashizaki Y."/>
            <person name="Johnson-Hopson C."/>
            <person name="Hsuan V.W."/>
            <person name="Iida K."/>
            <person name="Karnes M."/>
            <person name="Khan S."/>
            <person name="Koesema E."/>
            <person name="Ishida J."/>
            <person name="Jiang P.X."/>
            <person name="Jones T."/>
            <person name="Kawai J."/>
            <person name="Kamiya A."/>
            <person name="Meyers C."/>
            <person name="Nakajima M."/>
            <person name="Narusaka M."/>
            <person name="Seki M."/>
            <person name="Sakurai T."/>
            <person name="Satou M."/>
            <person name="Tamse R."/>
            <person name="Vaysberg M."/>
            <person name="Wallender E.K."/>
            <person name="Wong C."/>
            <person name="Yamamura Y."/>
            <person name="Yuan S."/>
            <person name="Shinozaki K."/>
            <person name="Davis R.W."/>
            <person name="Theologis A."/>
            <person name="Ecker J.R."/>
        </authorList>
    </citation>
    <scope>NUCLEOTIDE SEQUENCE [LARGE SCALE MRNA]</scope>
    <source>
        <strain>cv. Columbia</strain>
    </source>
</reference>
<feature type="chain" id="PRO_0000401347" description="Probable receptor-like protein kinase At4g10390">
    <location>
        <begin position="1"/>
        <end position="342"/>
    </location>
</feature>
<feature type="domain" description="Protein kinase" evidence="2">
    <location>
        <begin position="41"/>
        <end position="336"/>
    </location>
</feature>
<feature type="active site" description="Proton acceptor" evidence="2 3">
    <location>
        <position position="165"/>
    </location>
</feature>
<feature type="binding site" evidence="2">
    <location>
        <begin position="47"/>
        <end position="55"/>
    </location>
    <ligand>
        <name>ATP</name>
        <dbReference type="ChEBI" id="CHEBI:30616"/>
    </ligand>
</feature>
<feature type="binding site" evidence="2">
    <location>
        <position position="69"/>
    </location>
    <ligand>
        <name>ATP</name>
        <dbReference type="ChEBI" id="CHEBI:30616"/>
    </ligand>
</feature>
<feature type="modified residue" description="Phosphoserine" evidence="1">
    <location>
        <position position="169"/>
    </location>
</feature>
<feature type="modified residue" description="Phosphoserine" evidence="1">
    <location>
        <position position="201"/>
    </location>
</feature>
<feature type="modified residue" description="Phosphotyrosine" evidence="1">
    <location>
        <position position="220"/>
    </location>
</feature>
<gene>
    <name type="ordered locus">At4g10390</name>
    <name type="ORF">F24G24.190</name>
    <name type="ORF">F7L13.4</name>
</gene>
<dbReference type="EC" id="2.7.11.1"/>
<dbReference type="EMBL" id="AL049488">
    <property type="protein sequence ID" value="CAB39792.1"/>
    <property type="molecule type" value="Genomic_DNA"/>
</dbReference>
<dbReference type="EMBL" id="AL161517">
    <property type="protein sequence ID" value="CAB78162.1"/>
    <property type="molecule type" value="Genomic_DNA"/>
</dbReference>
<dbReference type="EMBL" id="CP002687">
    <property type="protein sequence ID" value="AEE82875.1"/>
    <property type="molecule type" value="Genomic_DNA"/>
</dbReference>
<dbReference type="EMBL" id="AY093195">
    <property type="protein sequence ID" value="AAM13194.1"/>
    <property type="molecule type" value="mRNA"/>
</dbReference>
<dbReference type="EMBL" id="BT000246">
    <property type="protein sequence ID" value="AAN15565.1"/>
    <property type="molecule type" value="mRNA"/>
</dbReference>
<dbReference type="PIR" id="T04054">
    <property type="entry name" value="T04054"/>
</dbReference>
<dbReference type="RefSeq" id="NP_192777.1">
    <property type="nucleotide sequence ID" value="NM_117107.5"/>
</dbReference>
<dbReference type="SMR" id="Q9SV83"/>
<dbReference type="FunCoup" id="Q9SV83">
    <property type="interactions" value="332"/>
</dbReference>
<dbReference type="STRING" id="3702.Q9SV83"/>
<dbReference type="iPTMnet" id="Q9SV83"/>
<dbReference type="PaxDb" id="3702-AT4G10390.1"/>
<dbReference type="ProteomicsDB" id="242870"/>
<dbReference type="EnsemblPlants" id="AT4G10390.1">
    <property type="protein sequence ID" value="AT4G10390.1"/>
    <property type="gene ID" value="AT4G10390"/>
</dbReference>
<dbReference type="GeneID" id="826631"/>
<dbReference type="Gramene" id="AT4G10390.1">
    <property type="protein sequence ID" value="AT4G10390.1"/>
    <property type="gene ID" value="AT4G10390"/>
</dbReference>
<dbReference type="KEGG" id="ath:AT4G10390"/>
<dbReference type="Araport" id="AT4G10390"/>
<dbReference type="TAIR" id="AT4G10390"/>
<dbReference type="eggNOG" id="KOG1187">
    <property type="taxonomic scope" value="Eukaryota"/>
</dbReference>
<dbReference type="HOGENOM" id="CLU_000288_21_4_1"/>
<dbReference type="InParanoid" id="Q9SV83"/>
<dbReference type="OMA" id="YQVFRLE"/>
<dbReference type="OrthoDB" id="339325at2759"/>
<dbReference type="PhylomeDB" id="Q9SV83"/>
<dbReference type="PRO" id="PR:Q9SV83"/>
<dbReference type="Proteomes" id="UP000006548">
    <property type="component" value="Chromosome 4"/>
</dbReference>
<dbReference type="ExpressionAtlas" id="Q9SV83">
    <property type="expression patterns" value="baseline and differential"/>
</dbReference>
<dbReference type="GO" id="GO:0005524">
    <property type="term" value="F:ATP binding"/>
    <property type="evidence" value="ECO:0007669"/>
    <property type="project" value="UniProtKB-KW"/>
</dbReference>
<dbReference type="GO" id="GO:0106310">
    <property type="term" value="F:protein serine kinase activity"/>
    <property type="evidence" value="ECO:0007669"/>
    <property type="project" value="RHEA"/>
</dbReference>
<dbReference type="GO" id="GO:0004674">
    <property type="term" value="F:protein serine/threonine kinase activity"/>
    <property type="evidence" value="ECO:0007669"/>
    <property type="project" value="UniProtKB-KW"/>
</dbReference>
<dbReference type="GO" id="GO:0009611">
    <property type="term" value="P:response to wounding"/>
    <property type="evidence" value="ECO:0000270"/>
    <property type="project" value="TAIR"/>
</dbReference>
<dbReference type="CDD" id="cd14066">
    <property type="entry name" value="STKc_IRAK"/>
    <property type="match status" value="1"/>
</dbReference>
<dbReference type="FunFam" id="3.30.200.20:FF:001057">
    <property type="entry name" value="Probable receptor-like protein kinase At1g33260"/>
    <property type="match status" value="1"/>
</dbReference>
<dbReference type="FunFam" id="1.10.510.10:FF:000809">
    <property type="entry name" value="Serine/threonine-protein kinase-like protein At5g23170"/>
    <property type="match status" value="1"/>
</dbReference>
<dbReference type="Gene3D" id="3.30.200.20">
    <property type="entry name" value="Phosphorylase Kinase, domain 1"/>
    <property type="match status" value="1"/>
</dbReference>
<dbReference type="Gene3D" id="1.10.510.10">
    <property type="entry name" value="Transferase(Phosphotransferase) domain 1"/>
    <property type="match status" value="1"/>
</dbReference>
<dbReference type="InterPro" id="IPR011009">
    <property type="entry name" value="Kinase-like_dom_sf"/>
</dbReference>
<dbReference type="InterPro" id="IPR000719">
    <property type="entry name" value="Prot_kinase_dom"/>
</dbReference>
<dbReference type="InterPro" id="IPR017441">
    <property type="entry name" value="Protein_kinase_ATP_BS"/>
</dbReference>
<dbReference type="InterPro" id="IPR008271">
    <property type="entry name" value="Ser/Thr_kinase_AS"/>
</dbReference>
<dbReference type="PANTHER" id="PTHR27001">
    <property type="entry name" value="OS01G0253100 PROTEIN"/>
    <property type="match status" value="1"/>
</dbReference>
<dbReference type="PANTHER" id="PTHR27001:SF915">
    <property type="entry name" value="PROTEIN KINASE DOMAIN-CONTAINING PROTEIN"/>
    <property type="match status" value="1"/>
</dbReference>
<dbReference type="Pfam" id="PF00069">
    <property type="entry name" value="Pkinase"/>
    <property type="match status" value="1"/>
</dbReference>
<dbReference type="SMART" id="SM00220">
    <property type="entry name" value="S_TKc"/>
    <property type="match status" value="1"/>
</dbReference>
<dbReference type="SUPFAM" id="SSF56112">
    <property type="entry name" value="Protein kinase-like (PK-like)"/>
    <property type="match status" value="1"/>
</dbReference>
<dbReference type="PROSITE" id="PS00107">
    <property type="entry name" value="PROTEIN_KINASE_ATP"/>
    <property type="match status" value="1"/>
</dbReference>
<dbReference type="PROSITE" id="PS50011">
    <property type="entry name" value="PROTEIN_KINASE_DOM"/>
    <property type="match status" value="1"/>
</dbReference>
<dbReference type="PROSITE" id="PS00108">
    <property type="entry name" value="PROTEIN_KINASE_ST"/>
    <property type="match status" value="1"/>
</dbReference>
<evidence type="ECO:0000250" key="1">
    <source>
        <dbReference type="UniProtKB" id="O48814"/>
    </source>
</evidence>
<evidence type="ECO:0000255" key="2">
    <source>
        <dbReference type="PROSITE-ProRule" id="PRU00159"/>
    </source>
</evidence>
<evidence type="ECO:0000255" key="3">
    <source>
        <dbReference type="PROSITE-ProRule" id="PRU10027"/>
    </source>
</evidence>
<organism>
    <name type="scientific">Arabidopsis thaliana</name>
    <name type="common">Mouse-ear cress</name>
    <dbReference type="NCBI Taxonomy" id="3702"/>
    <lineage>
        <taxon>Eukaryota</taxon>
        <taxon>Viridiplantae</taxon>
        <taxon>Streptophyta</taxon>
        <taxon>Embryophyta</taxon>
        <taxon>Tracheophyta</taxon>
        <taxon>Spermatophyta</taxon>
        <taxon>Magnoliopsida</taxon>
        <taxon>eudicotyledons</taxon>
        <taxon>Gunneridae</taxon>
        <taxon>Pentapetalae</taxon>
        <taxon>rosids</taxon>
        <taxon>malvids</taxon>
        <taxon>Brassicales</taxon>
        <taxon>Brassicaceae</taxon>
        <taxon>Camelineae</taxon>
        <taxon>Arabidopsis</taxon>
    </lineage>
</organism>